<sequence length="206" mass="22226">MLGLIGKKVGMTQIFQKNGIVVPVTVIEFQPNYIIGKKTVDRDGYSALIAGSVDLKSSKVSKPIKGQYKSLKDIEPKRYVIELKGLDGYDAGDEIKVDVFKSVKYVDVTGTTKGKGFQGAMKRHNFSGGPSSHGSKFHRHLGGTGQATTPARTFKGTKMAGRMAGNQQTIQNLEVVLIDEEKRALLVKGAVPGAKGSFVVVKKSKK</sequence>
<accession>P94267</accession>
<accession>O51432</accession>
<reference key="1">
    <citation type="submission" date="1996-12" db="EMBL/GenBank/DDBJ databases">
        <authorList>
            <person name="Perlee L."/>
            <person name="Qi H."/>
            <person name="Schwartz I."/>
        </authorList>
    </citation>
    <scope>NUCLEOTIDE SEQUENCE [GENOMIC DNA]</scope>
    <source>
        <strain>ATCC 35210 / DSM 4680 / CIP 102532 / B31</strain>
    </source>
</reference>
<reference key="2">
    <citation type="journal article" date="1997" name="Nature">
        <title>Genomic sequence of a Lyme disease spirochaete, Borrelia burgdorferi.</title>
        <authorList>
            <person name="Fraser C.M."/>
            <person name="Casjens S."/>
            <person name="Huang W.M."/>
            <person name="Sutton G.G."/>
            <person name="Clayton R.A."/>
            <person name="Lathigra R."/>
            <person name="White O."/>
            <person name="Ketchum K.A."/>
            <person name="Dodson R.J."/>
            <person name="Hickey E.K."/>
            <person name="Gwinn M.L."/>
            <person name="Dougherty B.A."/>
            <person name="Tomb J.-F."/>
            <person name="Fleischmann R.D."/>
            <person name="Richardson D.L."/>
            <person name="Peterson J.D."/>
            <person name="Kerlavage A.R."/>
            <person name="Quackenbush J."/>
            <person name="Salzberg S.L."/>
            <person name="Hanson M."/>
            <person name="van Vugt R."/>
            <person name="Palmer N."/>
            <person name="Adams M.D."/>
            <person name="Gocayne J.D."/>
            <person name="Weidman J.F."/>
            <person name="Utterback T.R."/>
            <person name="Watthey L."/>
            <person name="McDonald L.A."/>
            <person name="Artiach P."/>
            <person name="Bowman C."/>
            <person name="Garland S.A."/>
            <person name="Fujii C."/>
            <person name="Cotton M.D."/>
            <person name="Horst K."/>
            <person name="Roberts K.M."/>
            <person name="Hatch B."/>
            <person name="Smith H.O."/>
            <person name="Venter J.C."/>
        </authorList>
    </citation>
    <scope>NUCLEOTIDE SEQUENCE [LARGE SCALE GENOMIC DNA]</scope>
    <source>
        <strain>ATCC 35210 / DSM 4680 / CIP 102532 / B31</strain>
    </source>
</reference>
<comment type="function">
    <text evidence="1">One of the primary rRNA binding proteins, it binds directly near the 3'-end of the 23S rRNA, where it nucleates assembly of the 50S subunit.</text>
</comment>
<comment type="subunit">
    <text evidence="1">Part of the 50S ribosomal subunit. Forms a cluster with proteins L14 and L19.</text>
</comment>
<comment type="similarity">
    <text evidence="1">Belongs to the universal ribosomal protein uL3 family.</text>
</comment>
<dbReference type="EMBL" id="U78193">
    <property type="protein sequence ID" value="AAB36822.1"/>
    <property type="molecule type" value="Genomic_DNA"/>
</dbReference>
<dbReference type="EMBL" id="AE000783">
    <property type="protein sequence ID" value="AAC66864.1"/>
    <property type="molecule type" value="Genomic_DNA"/>
</dbReference>
<dbReference type="PIR" id="E70159">
    <property type="entry name" value="E70159"/>
</dbReference>
<dbReference type="RefSeq" id="NP_212612.1">
    <property type="nucleotide sequence ID" value="NC_001318.1"/>
</dbReference>
<dbReference type="PDB" id="8FMW">
    <property type="method" value="EM"/>
    <property type="resolution" value="2.86 A"/>
    <property type="chains" value="AE=1-206"/>
</dbReference>
<dbReference type="PDB" id="8FN2">
    <property type="method" value="EM"/>
    <property type="resolution" value="3.40 A"/>
    <property type="chains" value="E=1-206"/>
</dbReference>
<dbReference type="PDBsum" id="8FMW"/>
<dbReference type="PDBsum" id="8FN2"/>
<dbReference type="EMDB" id="EMD-29298"/>
<dbReference type="EMDB" id="EMD-29304"/>
<dbReference type="SMR" id="P94267"/>
<dbReference type="STRING" id="224326.BB_0478"/>
<dbReference type="PaxDb" id="224326-BB_0478"/>
<dbReference type="EnsemblBacteria" id="AAC66864">
    <property type="protein sequence ID" value="AAC66864"/>
    <property type="gene ID" value="BB_0478"/>
</dbReference>
<dbReference type="KEGG" id="bbu:BB_0478"/>
<dbReference type="PATRIC" id="fig|224326.49.peg.869"/>
<dbReference type="HOGENOM" id="CLU_044142_4_1_12"/>
<dbReference type="OrthoDB" id="9806135at2"/>
<dbReference type="Proteomes" id="UP000001807">
    <property type="component" value="Chromosome"/>
</dbReference>
<dbReference type="GO" id="GO:0022625">
    <property type="term" value="C:cytosolic large ribosomal subunit"/>
    <property type="evidence" value="ECO:0007669"/>
    <property type="project" value="TreeGrafter"/>
</dbReference>
<dbReference type="GO" id="GO:0019843">
    <property type="term" value="F:rRNA binding"/>
    <property type="evidence" value="ECO:0007669"/>
    <property type="project" value="UniProtKB-UniRule"/>
</dbReference>
<dbReference type="GO" id="GO:0003735">
    <property type="term" value="F:structural constituent of ribosome"/>
    <property type="evidence" value="ECO:0007669"/>
    <property type="project" value="InterPro"/>
</dbReference>
<dbReference type="GO" id="GO:0006412">
    <property type="term" value="P:translation"/>
    <property type="evidence" value="ECO:0007669"/>
    <property type="project" value="UniProtKB-UniRule"/>
</dbReference>
<dbReference type="FunFam" id="2.40.30.10:FF:000004">
    <property type="entry name" value="50S ribosomal protein L3"/>
    <property type="match status" value="1"/>
</dbReference>
<dbReference type="Gene3D" id="2.40.30.10">
    <property type="entry name" value="Translation factors"/>
    <property type="match status" value="2"/>
</dbReference>
<dbReference type="HAMAP" id="MF_01325_B">
    <property type="entry name" value="Ribosomal_uL3_B"/>
    <property type="match status" value="1"/>
</dbReference>
<dbReference type="InterPro" id="IPR000597">
    <property type="entry name" value="Ribosomal_uL3"/>
</dbReference>
<dbReference type="InterPro" id="IPR019927">
    <property type="entry name" value="Ribosomal_uL3_bac/org-type"/>
</dbReference>
<dbReference type="InterPro" id="IPR019926">
    <property type="entry name" value="Ribosomal_uL3_CS"/>
</dbReference>
<dbReference type="InterPro" id="IPR009000">
    <property type="entry name" value="Transl_B-barrel_sf"/>
</dbReference>
<dbReference type="NCBIfam" id="TIGR03625">
    <property type="entry name" value="L3_bact"/>
    <property type="match status" value="1"/>
</dbReference>
<dbReference type="PANTHER" id="PTHR11229">
    <property type="entry name" value="50S RIBOSOMAL PROTEIN L3"/>
    <property type="match status" value="1"/>
</dbReference>
<dbReference type="PANTHER" id="PTHR11229:SF16">
    <property type="entry name" value="LARGE RIBOSOMAL SUBUNIT PROTEIN UL3C"/>
    <property type="match status" value="1"/>
</dbReference>
<dbReference type="Pfam" id="PF00297">
    <property type="entry name" value="Ribosomal_L3"/>
    <property type="match status" value="1"/>
</dbReference>
<dbReference type="SUPFAM" id="SSF50447">
    <property type="entry name" value="Translation proteins"/>
    <property type="match status" value="1"/>
</dbReference>
<dbReference type="PROSITE" id="PS00474">
    <property type="entry name" value="RIBOSOMAL_L3"/>
    <property type="match status" value="1"/>
</dbReference>
<gene>
    <name evidence="1" type="primary">rplC</name>
    <name type="ordered locus">BB_0478</name>
</gene>
<organism>
    <name type="scientific">Borreliella burgdorferi (strain ATCC 35210 / DSM 4680 / CIP 102532 / B31)</name>
    <name type="common">Borrelia burgdorferi</name>
    <dbReference type="NCBI Taxonomy" id="224326"/>
    <lineage>
        <taxon>Bacteria</taxon>
        <taxon>Pseudomonadati</taxon>
        <taxon>Spirochaetota</taxon>
        <taxon>Spirochaetia</taxon>
        <taxon>Spirochaetales</taxon>
        <taxon>Borreliaceae</taxon>
        <taxon>Borreliella</taxon>
    </lineage>
</organism>
<name>RL3_BORBU</name>
<protein>
    <recommendedName>
        <fullName evidence="1">Large ribosomal subunit protein uL3</fullName>
    </recommendedName>
    <alternativeName>
        <fullName evidence="3">50S ribosomal protein L3</fullName>
    </alternativeName>
</protein>
<feature type="chain" id="PRO_0000077070" description="Large ribosomal subunit protein uL3">
    <location>
        <begin position="1"/>
        <end position="206"/>
    </location>
</feature>
<feature type="region of interest" description="Disordered" evidence="2">
    <location>
        <begin position="127"/>
        <end position="151"/>
    </location>
</feature>
<feature type="sequence conflict" description="In Ref. 1; AAC66864." evidence="3" ref="1">
    <original>A</original>
    <variation>G</variation>
    <location>
        <position position="164"/>
    </location>
</feature>
<feature type="sequence conflict" description="In Ref. 1; AAB36822." evidence="3" ref="1">
    <original>A</original>
    <variation>P</variation>
    <location>
        <position position="190"/>
    </location>
</feature>
<feature type="strand" evidence="4">
    <location>
        <begin position="3"/>
        <end position="15"/>
    </location>
</feature>
<feature type="strand" evidence="4">
    <location>
        <begin position="21"/>
        <end position="28"/>
    </location>
</feature>
<feature type="strand" evidence="4">
    <location>
        <begin position="32"/>
        <end position="38"/>
    </location>
</feature>
<feature type="turn" evidence="4">
    <location>
        <begin position="40"/>
        <end position="43"/>
    </location>
</feature>
<feature type="strand" evidence="4">
    <location>
        <begin position="47"/>
        <end position="51"/>
    </location>
</feature>
<feature type="helix" evidence="4">
    <location>
        <begin position="57"/>
        <end position="59"/>
    </location>
</feature>
<feature type="helix" evidence="4">
    <location>
        <begin position="62"/>
        <end position="67"/>
    </location>
</feature>
<feature type="strand" evidence="4">
    <location>
        <begin position="69"/>
        <end position="73"/>
    </location>
</feature>
<feature type="strand" evidence="4">
    <location>
        <begin position="80"/>
        <end position="84"/>
    </location>
</feature>
<feature type="helix" evidence="4">
    <location>
        <begin position="97"/>
        <end position="100"/>
    </location>
</feature>
<feature type="strand" evidence="4">
    <location>
        <begin position="104"/>
        <end position="111"/>
    </location>
</feature>
<feature type="strand" evidence="4">
    <location>
        <begin position="114"/>
        <end position="118"/>
    </location>
</feature>
<feature type="helix" evidence="4">
    <location>
        <begin position="120"/>
        <end position="124"/>
    </location>
</feature>
<feature type="strand" evidence="4">
    <location>
        <begin position="138"/>
        <end position="140"/>
    </location>
</feature>
<feature type="strand" evidence="4">
    <location>
        <begin position="147"/>
        <end position="152"/>
    </location>
</feature>
<feature type="strand" evidence="4">
    <location>
        <begin position="160"/>
        <end position="164"/>
    </location>
</feature>
<feature type="strand" evidence="4">
    <location>
        <begin position="167"/>
        <end position="179"/>
    </location>
</feature>
<feature type="turn" evidence="4">
    <location>
        <begin position="180"/>
        <end position="183"/>
    </location>
</feature>
<feature type="strand" evidence="4">
    <location>
        <begin position="184"/>
        <end position="189"/>
    </location>
</feature>
<feature type="strand" evidence="4">
    <location>
        <begin position="198"/>
        <end position="203"/>
    </location>
</feature>
<evidence type="ECO:0000255" key="1">
    <source>
        <dbReference type="HAMAP-Rule" id="MF_01325"/>
    </source>
</evidence>
<evidence type="ECO:0000256" key="2">
    <source>
        <dbReference type="SAM" id="MobiDB-lite"/>
    </source>
</evidence>
<evidence type="ECO:0000305" key="3"/>
<evidence type="ECO:0007829" key="4">
    <source>
        <dbReference type="PDB" id="8FN2"/>
    </source>
</evidence>
<keyword id="KW-0002">3D-structure</keyword>
<keyword id="KW-1185">Reference proteome</keyword>
<keyword id="KW-0687">Ribonucleoprotein</keyword>
<keyword id="KW-0689">Ribosomal protein</keyword>
<keyword id="KW-0694">RNA-binding</keyword>
<keyword id="KW-0699">rRNA-binding</keyword>
<proteinExistence type="evidence at protein level"/>